<comment type="function">
    <text evidence="1">Required for maturation of urease via the functional incorporation of the urease nickel metallocenter.</text>
</comment>
<comment type="subunit">
    <text evidence="1">UreH, UreF and UreG form a complex that acts as a GTP-hydrolysis-dependent molecular chaperone, activating the urease apoprotein by helping to assemble the nickel containing metallocenter of UreC. The UreE protein probably delivers the nickel.</text>
</comment>
<comment type="subcellular location">
    <subcellularLocation>
        <location evidence="1">Cytoplasm</location>
    </subcellularLocation>
</comment>
<comment type="similarity">
    <text evidence="1">Belongs to the UreD family.</text>
</comment>
<organism>
    <name type="scientific">Helicobacter pylori (strain G27)</name>
    <dbReference type="NCBI Taxonomy" id="563041"/>
    <lineage>
        <taxon>Bacteria</taxon>
        <taxon>Pseudomonadati</taxon>
        <taxon>Campylobacterota</taxon>
        <taxon>Epsilonproteobacteria</taxon>
        <taxon>Campylobacterales</taxon>
        <taxon>Helicobacteraceae</taxon>
        <taxon>Helicobacter</taxon>
    </lineage>
</organism>
<feature type="chain" id="PRO_1000145093" description="Urease accessory protein UreH">
    <location>
        <begin position="1"/>
        <end position="265"/>
    </location>
</feature>
<sequence length="265" mass="29773">MNTYAQESKLRLKTKIGADGRCVIEDNFFTPPFKLMAPFYPKDDLAEIMLLAVSPGLMKGDVQDVQLNIGPNCKLRITSQSFEKIHNTEDGFASRDMHIVVGENAFLDFAPFPLIPFENAHFKGNTTISLHSSSQLLYSEIIVAGRVARNELFKFNRLHTKISILQDEKPIYYDNTILDPKTTDMNNMCMFDGYTHYLNLVLVNCPIELSSVRECIEESEGVDGAVSEIASSHLCVKALAKGSEPLLHLREKIARLTTQTITQKI</sequence>
<dbReference type="EMBL" id="CP001173">
    <property type="protein sequence ID" value="ACI26834.1"/>
    <property type="molecule type" value="Genomic_DNA"/>
</dbReference>
<dbReference type="RefSeq" id="WP_001099441.1">
    <property type="nucleotide sequence ID" value="NC_011333.1"/>
</dbReference>
<dbReference type="SMR" id="B5Z670"/>
<dbReference type="KEGG" id="hpg:HPG27_62"/>
<dbReference type="HOGENOM" id="CLU_056339_6_1_7"/>
<dbReference type="Proteomes" id="UP000001735">
    <property type="component" value="Chromosome"/>
</dbReference>
<dbReference type="GO" id="GO:0005737">
    <property type="term" value="C:cytoplasm"/>
    <property type="evidence" value="ECO:0007669"/>
    <property type="project" value="UniProtKB-SubCell"/>
</dbReference>
<dbReference type="GO" id="GO:0016151">
    <property type="term" value="F:nickel cation binding"/>
    <property type="evidence" value="ECO:0007669"/>
    <property type="project" value="InterPro"/>
</dbReference>
<dbReference type="HAMAP" id="MF_01384">
    <property type="entry name" value="UreD"/>
    <property type="match status" value="1"/>
</dbReference>
<dbReference type="InterPro" id="IPR002669">
    <property type="entry name" value="UreD"/>
</dbReference>
<dbReference type="PANTHER" id="PTHR33643">
    <property type="entry name" value="UREASE ACCESSORY PROTEIN D"/>
    <property type="match status" value="1"/>
</dbReference>
<dbReference type="PANTHER" id="PTHR33643:SF1">
    <property type="entry name" value="UREASE ACCESSORY PROTEIN D"/>
    <property type="match status" value="1"/>
</dbReference>
<dbReference type="Pfam" id="PF01774">
    <property type="entry name" value="UreD"/>
    <property type="match status" value="1"/>
</dbReference>
<keyword id="KW-0143">Chaperone</keyword>
<keyword id="KW-0963">Cytoplasm</keyword>
<keyword id="KW-0996">Nickel insertion</keyword>
<keyword id="KW-1185">Reference proteome</keyword>
<protein>
    <recommendedName>
        <fullName evidence="1">Urease accessory protein UreH</fullName>
    </recommendedName>
</protein>
<name>UREH_HELPG</name>
<gene>
    <name evidence="1" type="primary">ureH</name>
    <name type="ordered locus">HPG27_62</name>
</gene>
<evidence type="ECO:0000255" key="1">
    <source>
        <dbReference type="HAMAP-Rule" id="MF_01384"/>
    </source>
</evidence>
<reference key="1">
    <citation type="journal article" date="2009" name="J. Bacteriol.">
        <title>The complete genome sequence of Helicobacter pylori strain G27.</title>
        <authorList>
            <person name="Baltrus D.A."/>
            <person name="Amieva M.R."/>
            <person name="Covacci A."/>
            <person name="Lowe T.M."/>
            <person name="Merrell D.S."/>
            <person name="Ottemann K.M."/>
            <person name="Stein M."/>
            <person name="Salama N.R."/>
            <person name="Guillemin K."/>
        </authorList>
    </citation>
    <scope>NUCLEOTIDE SEQUENCE [LARGE SCALE GENOMIC DNA]</scope>
    <source>
        <strain>G27</strain>
    </source>
</reference>
<proteinExistence type="inferred from homology"/>
<accession>B5Z670</accession>